<evidence type="ECO:0000250" key="1"/>
<evidence type="ECO:0000255" key="2"/>
<evidence type="ECO:0000305" key="3"/>
<name>MNHD2_STAAR</name>
<protein>
    <recommendedName>
        <fullName>Putative antiporter subunit mnhD2</fullName>
    </recommendedName>
    <alternativeName>
        <fullName>Mrp complex subunit D2</fullName>
    </alternativeName>
    <alternativeName>
        <fullName>Putative NADH-ubiquinone oxidoreductase subunit mnhD2</fullName>
    </alternativeName>
</protein>
<reference key="1">
    <citation type="journal article" date="2004" name="Proc. Natl. Acad. Sci. U.S.A.">
        <title>Complete genomes of two clinical Staphylococcus aureus strains: evidence for the rapid evolution of virulence and drug resistance.</title>
        <authorList>
            <person name="Holden M.T.G."/>
            <person name="Feil E.J."/>
            <person name="Lindsay J.A."/>
            <person name="Peacock S.J."/>
            <person name="Day N.P.J."/>
            <person name="Enright M.C."/>
            <person name="Foster T.J."/>
            <person name="Moore C.E."/>
            <person name="Hurst L."/>
            <person name="Atkin R."/>
            <person name="Barron A."/>
            <person name="Bason N."/>
            <person name="Bentley S.D."/>
            <person name="Chillingworth C."/>
            <person name="Chillingworth T."/>
            <person name="Churcher C."/>
            <person name="Clark L."/>
            <person name="Corton C."/>
            <person name="Cronin A."/>
            <person name="Doggett J."/>
            <person name="Dowd L."/>
            <person name="Feltwell T."/>
            <person name="Hance Z."/>
            <person name="Harris B."/>
            <person name="Hauser H."/>
            <person name="Holroyd S."/>
            <person name="Jagels K."/>
            <person name="James K.D."/>
            <person name="Lennard N."/>
            <person name="Line A."/>
            <person name="Mayes R."/>
            <person name="Moule S."/>
            <person name="Mungall K."/>
            <person name="Ormond D."/>
            <person name="Quail M.A."/>
            <person name="Rabbinowitsch E."/>
            <person name="Rutherford K.M."/>
            <person name="Sanders M."/>
            <person name="Sharp S."/>
            <person name="Simmonds M."/>
            <person name="Stevens K."/>
            <person name="Whitehead S."/>
            <person name="Barrell B.G."/>
            <person name="Spratt B.G."/>
            <person name="Parkhill J."/>
        </authorList>
    </citation>
    <scope>NUCLEOTIDE SEQUENCE [LARGE SCALE GENOMIC DNA]</scope>
    <source>
        <strain>MRSA252</strain>
    </source>
</reference>
<dbReference type="EMBL" id="BX571856">
    <property type="protein sequence ID" value="CAG39651.1"/>
    <property type="molecule type" value="Genomic_DNA"/>
</dbReference>
<dbReference type="RefSeq" id="WP_000950558.1">
    <property type="nucleotide sequence ID" value="NC_002952.2"/>
</dbReference>
<dbReference type="SMR" id="Q6GJ44"/>
<dbReference type="KEGG" id="sar:SAR0633"/>
<dbReference type="HOGENOM" id="CLU_007100_9_2_9"/>
<dbReference type="Proteomes" id="UP000000596">
    <property type="component" value="Chromosome"/>
</dbReference>
<dbReference type="GO" id="GO:0005886">
    <property type="term" value="C:plasma membrane"/>
    <property type="evidence" value="ECO:0007669"/>
    <property type="project" value="UniProtKB-SubCell"/>
</dbReference>
<dbReference type="GO" id="GO:0015297">
    <property type="term" value="F:antiporter activity"/>
    <property type="evidence" value="ECO:0007669"/>
    <property type="project" value="UniProtKB-KW"/>
</dbReference>
<dbReference type="GO" id="GO:0008137">
    <property type="term" value="F:NADH dehydrogenase (ubiquinone) activity"/>
    <property type="evidence" value="ECO:0007669"/>
    <property type="project" value="InterPro"/>
</dbReference>
<dbReference type="GO" id="GO:0042773">
    <property type="term" value="P:ATP synthesis coupled electron transport"/>
    <property type="evidence" value="ECO:0007669"/>
    <property type="project" value="InterPro"/>
</dbReference>
<dbReference type="InterPro" id="IPR050586">
    <property type="entry name" value="CPA3_Na-H_Antiporter_D"/>
</dbReference>
<dbReference type="InterPro" id="IPR003918">
    <property type="entry name" value="NADH_UbQ_OxRdtase"/>
</dbReference>
<dbReference type="InterPro" id="IPR001750">
    <property type="entry name" value="ND/Mrp_TM"/>
</dbReference>
<dbReference type="NCBIfam" id="NF009306">
    <property type="entry name" value="PRK12663.1"/>
    <property type="match status" value="1"/>
</dbReference>
<dbReference type="PANTHER" id="PTHR42703:SF1">
    <property type="entry name" value="NA(+)_H(+) ANTIPORTER SUBUNIT D1"/>
    <property type="match status" value="1"/>
</dbReference>
<dbReference type="PANTHER" id="PTHR42703">
    <property type="entry name" value="NADH DEHYDROGENASE"/>
    <property type="match status" value="1"/>
</dbReference>
<dbReference type="Pfam" id="PF00361">
    <property type="entry name" value="Proton_antipo_M"/>
    <property type="match status" value="1"/>
</dbReference>
<dbReference type="PRINTS" id="PR01437">
    <property type="entry name" value="NUOXDRDTASE4"/>
</dbReference>
<feature type="chain" id="PRO_0000372233" description="Putative antiporter subunit mnhD2">
    <location>
        <begin position="1"/>
        <end position="498"/>
    </location>
</feature>
<feature type="transmembrane region" description="Helical" evidence="2">
    <location>
        <begin position="2"/>
        <end position="22"/>
    </location>
</feature>
<feature type="transmembrane region" description="Helical" evidence="2">
    <location>
        <begin position="32"/>
        <end position="52"/>
    </location>
</feature>
<feature type="transmembrane region" description="Helical" evidence="2">
    <location>
        <begin position="78"/>
        <end position="98"/>
    </location>
</feature>
<feature type="transmembrane region" description="Helical" evidence="2">
    <location>
        <begin position="108"/>
        <end position="128"/>
    </location>
</feature>
<feature type="transmembrane region" description="Helical" evidence="2">
    <location>
        <begin position="130"/>
        <end position="150"/>
    </location>
</feature>
<feature type="transmembrane region" description="Helical" evidence="2">
    <location>
        <begin position="161"/>
        <end position="181"/>
    </location>
</feature>
<feature type="transmembrane region" description="Helical" evidence="2">
    <location>
        <begin position="209"/>
        <end position="229"/>
    </location>
</feature>
<feature type="transmembrane region" description="Helical" evidence="2">
    <location>
        <begin position="240"/>
        <end position="260"/>
    </location>
</feature>
<feature type="transmembrane region" description="Helical" evidence="2">
    <location>
        <begin position="271"/>
        <end position="291"/>
    </location>
</feature>
<feature type="transmembrane region" description="Helical" evidence="2">
    <location>
        <begin position="308"/>
        <end position="328"/>
    </location>
</feature>
<feature type="transmembrane region" description="Helical" evidence="2">
    <location>
        <begin position="330"/>
        <end position="350"/>
    </location>
</feature>
<feature type="transmembrane region" description="Helical" evidence="2">
    <location>
        <begin position="368"/>
        <end position="388"/>
    </location>
</feature>
<feature type="transmembrane region" description="Helical" evidence="2">
    <location>
        <begin position="403"/>
        <end position="423"/>
    </location>
</feature>
<feature type="transmembrane region" description="Helical" evidence="2">
    <location>
        <begin position="450"/>
        <end position="470"/>
    </location>
</feature>
<keyword id="KW-0050">Antiport</keyword>
<keyword id="KW-1003">Cell membrane</keyword>
<keyword id="KW-0406">Ion transport</keyword>
<keyword id="KW-0472">Membrane</keyword>
<keyword id="KW-0812">Transmembrane</keyword>
<keyword id="KW-1133">Transmembrane helix</keyword>
<keyword id="KW-0813">Transport</keyword>
<sequence>MLSNLLILPMLLPFLCALILVFLKNNDRISKYLYLGTMTITTIISLMLLIYVQRHRPITLDFGGWTAPFGIQFLGDSLSLIMVTTASFVITLIMAYGFGRGEHKANRYHLPSFILFLSVGVIGSFLTSDLFNLYVMFEIMLLASFVLITLGQSVEQLRAAIIYVVLNIIGSWLFLLGIGLLYKTVGTLNFSHIAMRLNDMGDNRTVTMISLIFLVAFSAKAALVLFMWLPKAYAVLNTELAALFAALMTKVGAYALIRFFTLLFDQHNGLIHPLLVTMAAITMVIGAIGVIAYKDIKKIAAYQVIISIGFIILGLGTNTFAGINGAIFYLVNDIVVKTLLFFIIGSLVYITGYRQYQYLNGLAKKEPFFGVAFIIMIFAIGGVPPFSGFPGKVLIFQGALQNGNYIGLALMIITSLIAMYSLFRILFYMYFGDKDGEEVHFKKIPQYRKGILSILVVVVIAIGIAAPVLLKITNDATELNTNDQLYQKLVNSHLKGEE</sequence>
<comment type="subunit">
    <text evidence="1">May form a heterooligomeric complex that consists of seven subunits: mnhA2, mnhB2, mnhC2, mnhD2, mnhE2, mnhF2 and mnhG2.</text>
</comment>
<comment type="subcellular location">
    <subcellularLocation>
        <location evidence="3">Cell membrane</location>
        <topology evidence="3">Multi-pass membrane protein</topology>
    </subcellularLocation>
</comment>
<comment type="similarity">
    <text evidence="3">Belongs to the CPA3 antiporters (TC 2.A.63) subunit D family.</text>
</comment>
<accession>Q6GJ44</accession>
<organism>
    <name type="scientific">Staphylococcus aureus (strain MRSA252)</name>
    <dbReference type="NCBI Taxonomy" id="282458"/>
    <lineage>
        <taxon>Bacteria</taxon>
        <taxon>Bacillati</taxon>
        <taxon>Bacillota</taxon>
        <taxon>Bacilli</taxon>
        <taxon>Bacillales</taxon>
        <taxon>Staphylococcaceae</taxon>
        <taxon>Staphylococcus</taxon>
    </lineage>
</organism>
<proteinExistence type="inferred from homology"/>
<gene>
    <name type="primary">mnhD2</name>
    <name type="synonym">mrpD2</name>
    <name type="ordered locus">SAR0633</name>
</gene>